<sequence length="155" mass="17438">MMTQDYKLQVEAIKCGTVIDHIPAQIGFKLLSLFKLTATDQRITIGLNLPSKRSGRKDLIKIENTFLTEQQANQLAMYAPDATVNRIDNYEVVKKLTLSLPERIDAVLTCPNSNCISHNEPVDSSFTVKAQRGEISLKCKYCEKEFDHLAVLHAD</sequence>
<feature type="chain" id="PRO_1000088847" description="Aspartate carbamoyltransferase regulatory chain">
    <location>
        <begin position="1"/>
        <end position="155"/>
    </location>
</feature>
<feature type="binding site" evidence="1">
    <location>
        <position position="110"/>
    </location>
    <ligand>
        <name>Zn(2+)</name>
        <dbReference type="ChEBI" id="CHEBI:29105"/>
    </ligand>
</feature>
<feature type="binding site" evidence="1">
    <location>
        <position position="115"/>
    </location>
    <ligand>
        <name>Zn(2+)</name>
        <dbReference type="ChEBI" id="CHEBI:29105"/>
    </ligand>
</feature>
<feature type="binding site" evidence="1">
    <location>
        <position position="139"/>
    </location>
    <ligand>
        <name>Zn(2+)</name>
        <dbReference type="ChEBI" id="CHEBI:29105"/>
    </ligand>
</feature>
<feature type="binding site" evidence="1">
    <location>
        <position position="142"/>
    </location>
    <ligand>
        <name>Zn(2+)</name>
        <dbReference type="ChEBI" id="CHEBI:29105"/>
    </ligand>
</feature>
<keyword id="KW-0479">Metal-binding</keyword>
<keyword id="KW-0665">Pyrimidine biosynthesis</keyword>
<keyword id="KW-0862">Zinc</keyword>
<proteinExistence type="inferred from homology"/>
<accession>B1JKJ7</accession>
<name>PYRI_YERPY</name>
<dbReference type="EMBL" id="CP000950">
    <property type="protein sequence ID" value="ACA66802.1"/>
    <property type="molecule type" value="Genomic_DNA"/>
</dbReference>
<dbReference type="SMR" id="B1JKJ7"/>
<dbReference type="KEGG" id="ypy:YPK_0499"/>
<dbReference type="GO" id="GO:0009347">
    <property type="term" value="C:aspartate carbamoyltransferase complex"/>
    <property type="evidence" value="ECO:0007669"/>
    <property type="project" value="InterPro"/>
</dbReference>
<dbReference type="GO" id="GO:0046872">
    <property type="term" value="F:metal ion binding"/>
    <property type="evidence" value="ECO:0007669"/>
    <property type="project" value="UniProtKB-KW"/>
</dbReference>
<dbReference type="GO" id="GO:0006207">
    <property type="term" value="P:'de novo' pyrimidine nucleobase biosynthetic process"/>
    <property type="evidence" value="ECO:0007669"/>
    <property type="project" value="InterPro"/>
</dbReference>
<dbReference type="GO" id="GO:0006221">
    <property type="term" value="P:pyrimidine nucleotide biosynthetic process"/>
    <property type="evidence" value="ECO:0007669"/>
    <property type="project" value="UniProtKB-UniRule"/>
</dbReference>
<dbReference type="FunFam" id="3.30.70.140:FF:000001">
    <property type="entry name" value="Aspartate carbamoyltransferase regulatory chain"/>
    <property type="match status" value="1"/>
</dbReference>
<dbReference type="Gene3D" id="2.30.30.20">
    <property type="entry name" value="Aspartate carbamoyltransferase regulatory subunit, C-terminal domain"/>
    <property type="match status" value="1"/>
</dbReference>
<dbReference type="Gene3D" id="3.30.70.140">
    <property type="entry name" value="Aspartate carbamoyltransferase regulatory subunit, N-terminal domain"/>
    <property type="match status" value="1"/>
</dbReference>
<dbReference type="HAMAP" id="MF_00002">
    <property type="entry name" value="Asp_carb_tr_reg"/>
    <property type="match status" value="1"/>
</dbReference>
<dbReference type="InterPro" id="IPR020545">
    <property type="entry name" value="Asp_carbamoyltransf_reg_N"/>
</dbReference>
<dbReference type="InterPro" id="IPR002801">
    <property type="entry name" value="Asp_carbamoylTrfase_reg"/>
</dbReference>
<dbReference type="InterPro" id="IPR020542">
    <property type="entry name" value="Asp_carbamoyltrfase_reg_C"/>
</dbReference>
<dbReference type="InterPro" id="IPR036792">
    <property type="entry name" value="Asp_carbatrfase_reg_C_sf"/>
</dbReference>
<dbReference type="InterPro" id="IPR036793">
    <property type="entry name" value="Asp_carbatrfase_reg_N_sf"/>
</dbReference>
<dbReference type="NCBIfam" id="TIGR00240">
    <property type="entry name" value="ATCase_reg"/>
    <property type="match status" value="1"/>
</dbReference>
<dbReference type="PANTHER" id="PTHR35805">
    <property type="entry name" value="ASPARTATE CARBAMOYLTRANSFERASE REGULATORY CHAIN"/>
    <property type="match status" value="1"/>
</dbReference>
<dbReference type="PANTHER" id="PTHR35805:SF1">
    <property type="entry name" value="ASPARTATE CARBAMOYLTRANSFERASE REGULATORY CHAIN"/>
    <property type="match status" value="1"/>
</dbReference>
<dbReference type="Pfam" id="PF01948">
    <property type="entry name" value="PyrI"/>
    <property type="match status" value="1"/>
</dbReference>
<dbReference type="Pfam" id="PF02748">
    <property type="entry name" value="PyrI_C"/>
    <property type="match status" value="1"/>
</dbReference>
<dbReference type="SUPFAM" id="SSF57825">
    <property type="entry name" value="Aspartate carbamoyltransferase, Regulatory-chain, C-terminal domain"/>
    <property type="match status" value="1"/>
</dbReference>
<dbReference type="SUPFAM" id="SSF54893">
    <property type="entry name" value="Aspartate carbamoyltransferase, Regulatory-chain, N-terminal domain"/>
    <property type="match status" value="1"/>
</dbReference>
<gene>
    <name evidence="1" type="primary">pyrI</name>
    <name type="ordered locus">YPK_0499</name>
</gene>
<protein>
    <recommendedName>
        <fullName evidence="1">Aspartate carbamoyltransferase regulatory chain</fullName>
    </recommendedName>
</protein>
<organism>
    <name type="scientific">Yersinia pseudotuberculosis serotype O:3 (strain YPIII)</name>
    <dbReference type="NCBI Taxonomy" id="502800"/>
    <lineage>
        <taxon>Bacteria</taxon>
        <taxon>Pseudomonadati</taxon>
        <taxon>Pseudomonadota</taxon>
        <taxon>Gammaproteobacteria</taxon>
        <taxon>Enterobacterales</taxon>
        <taxon>Yersiniaceae</taxon>
        <taxon>Yersinia</taxon>
    </lineage>
</organism>
<evidence type="ECO:0000255" key="1">
    <source>
        <dbReference type="HAMAP-Rule" id="MF_00002"/>
    </source>
</evidence>
<comment type="function">
    <text evidence="1">Involved in allosteric regulation of aspartate carbamoyltransferase.</text>
</comment>
<comment type="cofactor">
    <cofactor evidence="1">
        <name>Zn(2+)</name>
        <dbReference type="ChEBI" id="CHEBI:29105"/>
    </cofactor>
    <text evidence="1">Binds 1 zinc ion per subunit.</text>
</comment>
<comment type="subunit">
    <text evidence="1">Contains catalytic and regulatory chains.</text>
</comment>
<comment type="similarity">
    <text evidence="1">Belongs to the PyrI family.</text>
</comment>
<reference key="1">
    <citation type="submission" date="2008-02" db="EMBL/GenBank/DDBJ databases">
        <title>Complete sequence of Yersinia pseudotuberculosis YPIII.</title>
        <authorList>
            <consortium name="US DOE Joint Genome Institute"/>
            <person name="Copeland A."/>
            <person name="Lucas S."/>
            <person name="Lapidus A."/>
            <person name="Glavina del Rio T."/>
            <person name="Dalin E."/>
            <person name="Tice H."/>
            <person name="Bruce D."/>
            <person name="Goodwin L."/>
            <person name="Pitluck S."/>
            <person name="Munk A.C."/>
            <person name="Brettin T."/>
            <person name="Detter J.C."/>
            <person name="Han C."/>
            <person name="Tapia R."/>
            <person name="Schmutz J."/>
            <person name="Larimer F."/>
            <person name="Land M."/>
            <person name="Hauser L."/>
            <person name="Challacombe J.F."/>
            <person name="Green L."/>
            <person name="Lindler L.E."/>
            <person name="Nikolich M.P."/>
            <person name="Richardson P."/>
        </authorList>
    </citation>
    <scope>NUCLEOTIDE SEQUENCE [LARGE SCALE GENOMIC DNA]</scope>
    <source>
        <strain>YPIII</strain>
    </source>
</reference>